<protein>
    <recommendedName>
        <fullName evidence="4">Notoamide biosynthesis cluster transcriptional coactivator notQ'</fullName>
    </recommendedName>
    <alternativeName>
        <fullName evidence="4">Notoamide biosynthesis cluster protein Q'</fullName>
    </alternativeName>
</protein>
<accession>L7WMF9</accession>
<comment type="function">
    <text evidence="5">Transcription factor that probably regulates the expression of the gene cluster that mediates the biosynthesis of notoamide, a fungal indole alkaloid that belongs to a family of natural products containing a characteristic bicyclo[2.2.2]diazaoctane core.</text>
</comment>
<comment type="subcellular location">
    <subcellularLocation>
        <location evidence="1">Nucleus</location>
    </subcellularLocation>
</comment>
<comment type="biotechnology">
    <text evidence="3">Notoamides have been shown to exhibit antitumoral activities (PubMed:17304611). Notoamides A-C show moderate cytotoxicity against HeLa and L1210 cells with IC(50) values in the range of 22-52 mg/ml, but the IC(50) value of notoamide D is greater than 100 mg/ml (PubMed:17304611). Moreover, notoamide C induces G2/M-cell cycle arrest at a concentration of 6.3 mg/ml (PubMed:17304611).</text>
</comment>
<dbReference type="EMBL" id="JQ708194">
    <property type="protein sequence ID" value="AGC83588.1"/>
    <property type="molecule type" value="Genomic_DNA"/>
</dbReference>
<dbReference type="SMR" id="L7WMF9"/>
<dbReference type="VEuPathDB" id="FungiDB:ASPVEDRAFT_76488"/>
<dbReference type="GO" id="GO:0005634">
    <property type="term" value="C:nucleus"/>
    <property type="evidence" value="ECO:0007669"/>
    <property type="project" value="UniProtKB-SubCell"/>
</dbReference>
<dbReference type="GO" id="GO:0003677">
    <property type="term" value="F:DNA binding"/>
    <property type="evidence" value="ECO:0007669"/>
    <property type="project" value="UniProtKB-KW"/>
</dbReference>
<dbReference type="GO" id="GO:0000981">
    <property type="term" value="F:DNA-binding transcription factor activity, RNA polymerase II-specific"/>
    <property type="evidence" value="ECO:0007669"/>
    <property type="project" value="InterPro"/>
</dbReference>
<dbReference type="GO" id="GO:0008270">
    <property type="term" value="F:zinc ion binding"/>
    <property type="evidence" value="ECO:0007669"/>
    <property type="project" value="InterPro"/>
</dbReference>
<dbReference type="CDD" id="cd12148">
    <property type="entry name" value="fungal_TF_MHR"/>
    <property type="match status" value="1"/>
</dbReference>
<dbReference type="CDD" id="cd00067">
    <property type="entry name" value="GAL4"/>
    <property type="match status" value="1"/>
</dbReference>
<dbReference type="Gene3D" id="4.10.240.10">
    <property type="entry name" value="Zn(2)-C6 fungal-type DNA-binding domain"/>
    <property type="match status" value="1"/>
</dbReference>
<dbReference type="InterPro" id="IPR050815">
    <property type="entry name" value="TF_fung"/>
</dbReference>
<dbReference type="InterPro" id="IPR036864">
    <property type="entry name" value="Zn2-C6_fun-type_DNA-bd_sf"/>
</dbReference>
<dbReference type="InterPro" id="IPR001138">
    <property type="entry name" value="Zn2Cys6_DnaBD"/>
</dbReference>
<dbReference type="PANTHER" id="PTHR47338:SF20">
    <property type="entry name" value="ZN(II)2CYS6 TRANSCRIPTION FACTOR (EUROFUNG)"/>
    <property type="match status" value="1"/>
</dbReference>
<dbReference type="PANTHER" id="PTHR47338">
    <property type="entry name" value="ZN(II)2CYS6 TRANSCRIPTION FACTOR (EUROFUNG)-RELATED"/>
    <property type="match status" value="1"/>
</dbReference>
<dbReference type="Pfam" id="PF00172">
    <property type="entry name" value="Zn_clus"/>
    <property type="match status" value="1"/>
</dbReference>
<dbReference type="SMART" id="SM00066">
    <property type="entry name" value="GAL4"/>
    <property type="match status" value="1"/>
</dbReference>
<dbReference type="SUPFAM" id="SSF57701">
    <property type="entry name" value="Zn2/Cys6 DNA-binding domain"/>
    <property type="match status" value="1"/>
</dbReference>
<dbReference type="PROSITE" id="PS00463">
    <property type="entry name" value="ZN2_CY6_FUNGAL_1"/>
    <property type="match status" value="1"/>
</dbReference>
<dbReference type="PROSITE" id="PS50048">
    <property type="entry name" value="ZN2_CY6_FUNGAL_2"/>
    <property type="match status" value="1"/>
</dbReference>
<gene>
    <name evidence="4" type="primary">notQ'</name>
</gene>
<reference key="1">
    <citation type="journal article" date="2012" name="Med. Chem. Commun.">
        <title>Comparative analysis of the biosynthetic systems for fungal bicyclo[2.2.2]diazaoctane indole alkaloids: the (+)/(-)-notoamide, paraherquamide and malbrancheamide pathways.</title>
        <authorList>
            <person name="Li S."/>
            <person name="Anand K."/>
            <person name="Tran H."/>
            <person name="Yu F."/>
            <person name="Finefield J.M."/>
            <person name="Sunderhaus J.D."/>
            <person name="McAfoos T.J."/>
            <person name="Tsukamoto S."/>
            <person name="Williams R.M."/>
            <person name="Sherman D.H."/>
        </authorList>
    </citation>
    <scope>NUCLEOTIDE SEQUENCE [GENOMIC DNA]</scope>
    <source>
        <strain>NRRL 35600</strain>
    </source>
</reference>
<reference key="2">
    <citation type="journal article" date="2007" name="Angew. Chem. Int. Ed.">
        <title>Notoamides A-D: prenylated indole alkaloids isolated from a marine-derived fungus, Aspergillus sp.</title>
        <authorList>
            <person name="Kato H."/>
            <person name="Yoshida T."/>
            <person name="Tokue T."/>
            <person name="Nojiri Y."/>
            <person name="Hirota H."/>
            <person name="Ohta T."/>
            <person name="Williams R.M."/>
            <person name="Tsukamoto S."/>
        </authorList>
    </citation>
    <scope>BIOTECHNOLOGY</scope>
</reference>
<reference key="3">
    <citation type="journal article" date="2013" name="Appl. Microbiol. Biotechnol.">
        <title>Identification of a brevianamide F reverse prenyltransferase BrePT from Aspergillus versicolor with a broad substrate specificity towards tryptophan-containing cyclic dipeptides.</title>
        <authorList>
            <person name="Yin S."/>
            <person name="Yu X."/>
            <person name="Wang Q."/>
            <person name="Liu X.Q."/>
            <person name="Li S.M."/>
        </authorList>
    </citation>
    <scope>FUNCTION</scope>
</reference>
<keyword id="KW-0238">DNA-binding</keyword>
<keyword id="KW-0479">Metal-binding</keyword>
<keyword id="KW-0539">Nucleus</keyword>
<keyword id="KW-0804">Transcription</keyword>
<keyword id="KW-0805">Transcription regulation</keyword>
<keyword id="KW-0862">Zinc</keyword>
<proteinExistence type="evidence at protein level"/>
<sequence>MPPESERKLACLVCRHRKVACDRGRPQCGLCRKNGFDCEYKTREHRPGLRAGYVSQLEKRVEDLERQMEDVLGRLSQSQPSQPATERDDLATTPSTGRLAPPLCVQNVESTNSPQADTAPVETTALTYELQLVWLQKYQPWFPIMHHTSAVKAVAIWDSPGIPWERKQFLSERLRQEVIVNAMGSLHLRTVQALLTLSILFWGEGKWVQYSNLAAMCKRLSQQLGLPTVAGVAAAQPSKMCSLDAVLSDTKIDHEERLRAFWMIEMLDSIFALGLPSYPPTTAAPLGAILPCSDTAWALQDHFGECVPFHDLQYSSGFSMCISLCTVELAPVHQFQHSVIQTGAMAGGPEWQSAAQRLDERLTIWREEFVAAVFRLINAECPHDARAEMRPAVITLLQSQTSLPEGVGQETEPWPYANHRCMYACENMAAKIRRMEESELESCSPCLVLPIFAAARFYIAVAEHRTPALQSALPIEFYDLRYAVAEICHLLQRWVDRYSSPVLRSV</sequence>
<name>NOTQ_ASPVE</name>
<organism>
    <name type="scientific">Aspergillus versicolor</name>
    <dbReference type="NCBI Taxonomy" id="46472"/>
    <lineage>
        <taxon>Eukaryota</taxon>
        <taxon>Fungi</taxon>
        <taxon>Dikarya</taxon>
        <taxon>Ascomycota</taxon>
        <taxon>Pezizomycotina</taxon>
        <taxon>Eurotiomycetes</taxon>
        <taxon>Eurotiomycetidae</taxon>
        <taxon>Eurotiales</taxon>
        <taxon>Aspergillaceae</taxon>
        <taxon>Aspergillus</taxon>
        <taxon>Aspergillus subgen. Nidulantes</taxon>
    </lineage>
</organism>
<evidence type="ECO:0000255" key="1">
    <source>
        <dbReference type="PROSITE-ProRule" id="PRU00227"/>
    </source>
</evidence>
<evidence type="ECO:0000256" key="2">
    <source>
        <dbReference type="SAM" id="MobiDB-lite"/>
    </source>
</evidence>
<evidence type="ECO:0000269" key="3">
    <source>
    </source>
</evidence>
<evidence type="ECO:0000303" key="4">
    <source>
    </source>
</evidence>
<evidence type="ECO:0000305" key="5">
    <source>
    </source>
</evidence>
<feature type="chain" id="PRO_0000448820" description="Notoamide biosynthesis cluster transcriptional coactivator notQ'">
    <location>
        <begin position="1"/>
        <end position="506"/>
    </location>
</feature>
<feature type="DNA-binding region" description="Zn(2)-C6 fungal-type" evidence="1">
    <location>
        <begin position="11"/>
        <end position="38"/>
    </location>
</feature>
<feature type="region of interest" description="Disordered" evidence="2">
    <location>
        <begin position="73"/>
        <end position="102"/>
    </location>
</feature>
<feature type="compositionally biased region" description="Polar residues" evidence="2">
    <location>
        <begin position="75"/>
        <end position="84"/>
    </location>
</feature>